<sequence>MFTGIVEERGEVTGREALVDAARLTIRGPMVTADAGHGDSIAVNGVCLTVVDVLPDGQFTADVMAETLNRSNLGELRPGSRVNLERAAALGSRLGGHIVQGHVDATGEIVARCPSEHWEVVRIEMPASVARYVVEKGSITVDGISLTVSGLGAEQRDWFEVSLIPTTRELTTLGSAAVGTRVNLEVDVVAKYVERLMRSAG</sequence>
<comment type="function">
    <text evidence="1">Catalyzes the dismutation of two molecules of 6,7-dimethyl-8-ribityllumazine, resulting in the formation of riboflavin and 5-amino-6-(D-ribitylamino)uracil.</text>
</comment>
<comment type="catalytic activity">
    <reaction>
        <text>2 6,7-dimethyl-8-(1-D-ribityl)lumazine + H(+) = 5-amino-6-(D-ribitylamino)uracil + riboflavin</text>
        <dbReference type="Rhea" id="RHEA:20772"/>
        <dbReference type="ChEBI" id="CHEBI:15378"/>
        <dbReference type="ChEBI" id="CHEBI:15934"/>
        <dbReference type="ChEBI" id="CHEBI:57986"/>
        <dbReference type="ChEBI" id="CHEBI:58201"/>
        <dbReference type="EC" id="2.5.1.9"/>
    </reaction>
</comment>
<comment type="pathway">
    <text>Cofactor biosynthesis; riboflavin biosynthesis; riboflavin from 2-hydroxy-3-oxobutyl phosphate and 5-amino-6-(D-ribitylamino)uracil: step 2/2.</text>
</comment>
<comment type="subunit">
    <text evidence="1">Homotrimer.</text>
</comment>
<dbReference type="EC" id="2.5.1.9"/>
<dbReference type="EMBL" id="LT708304">
    <property type="protein sequence ID" value="SIU00050.1"/>
    <property type="molecule type" value="Genomic_DNA"/>
</dbReference>
<dbReference type="RefSeq" id="NP_855099.1">
    <property type="nucleotide sequence ID" value="NC_002945.3"/>
</dbReference>
<dbReference type="RefSeq" id="WP_003407318.1">
    <property type="nucleotide sequence ID" value="NC_002945.4"/>
</dbReference>
<dbReference type="SMR" id="P65328"/>
<dbReference type="KEGG" id="mbo:BQ2027_MB1447"/>
<dbReference type="PATRIC" id="fig|233413.5.peg.1582"/>
<dbReference type="UniPathway" id="UPA00275">
    <property type="reaction ID" value="UER00405"/>
</dbReference>
<dbReference type="Proteomes" id="UP000001419">
    <property type="component" value="Chromosome"/>
</dbReference>
<dbReference type="GO" id="GO:0004746">
    <property type="term" value="F:riboflavin synthase activity"/>
    <property type="evidence" value="ECO:0007669"/>
    <property type="project" value="UniProtKB-EC"/>
</dbReference>
<dbReference type="GO" id="GO:0009231">
    <property type="term" value="P:riboflavin biosynthetic process"/>
    <property type="evidence" value="ECO:0007669"/>
    <property type="project" value="UniProtKB-UniPathway"/>
</dbReference>
<dbReference type="CDD" id="cd00402">
    <property type="entry name" value="Riboflavin_synthase_like"/>
    <property type="match status" value="1"/>
</dbReference>
<dbReference type="FunFam" id="2.40.30.20:FF:000003">
    <property type="entry name" value="Riboflavin synthase, alpha subunit"/>
    <property type="match status" value="1"/>
</dbReference>
<dbReference type="FunFam" id="2.40.30.20:FF:000004">
    <property type="entry name" value="Riboflavin synthase, alpha subunit"/>
    <property type="match status" value="1"/>
</dbReference>
<dbReference type="Gene3D" id="2.40.30.20">
    <property type="match status" value="2"/>
</dbReference>
<dbReference type="InterPro" id="IPR023366">
    <property type="entry name" value="ATP_synth_asu-like_sf"/>
</dbReference>
<dbReference type="InterPro" id="IPR001783">
    <property type="entry name" value="Lumazine-bd"/>
</dbReference>
<dbReference type="InterPro" id="IPR026017">
    <property type="entry name" value="Lumazine-bd_dom"/>
</dbReference>
<dbReference type="InterPro" id="IPR017938">
    <property type="entry name" value="Riboflavin_synthase-like_b-brl"/>
</dbReference>
<dbReference type="NCBIfam" id="NF006767">
    <property type="entry name" value="PRK09289.1"/>
    <property type="match status" value="1"/>
</dbReference>
<dbReference type="NCBIfam" id="NF009566">
    <property type="entry name" value="PRK13020.1"/>
    <property type="match status" value="1"/>
</dbReference>
<dbReference type="NCBIfam" id="TIGR00187">
    <property type="entry name" value="ribE"/>
    <property type="match status" value="1"/>
</dbReference>
<dbReference type="PANTHER" id="PTHR21098:SF12">
    <property type="entry name" value="RIBOFLAVIN SYNTHASE"/>
    <property type="match status" value="1"/>
</dbReference>
<dbReference type="PANTHER" id="PTHR21098">
    <property type="entry name" value="RIBOFLAVIN SYNTHASE ALPHA CHAIN"/>
    <property type="match status" value="1"/>
</dbReference>
<dbReference type="Pfam" id="PF00677">
    <property type="entry name" value="Lum_binding"/>
    <property type="match status" value="2"/>
</dbReference>
<dbReference type="PIRSF" id="PIRSF000498">
    <property type="entry name" value="Riboflavin_syn_A"/>
    <property type="match status" value="1"/>
</dbReference>
<dbReference type="SUPFAM" id="SSF63380">
    <property type="entry name" value="Riboflavin synthase domain-like"/>
    <property type="match status" value="2"/>
</dbReference>
<dbReference type="PROSITE" id="PS51177">
    <property type="entry name" value="LUMAZINE_BIND"/>
    <property type="match status" value="2"/>
</dbReference>
<feature type="chain" id="PRO_0000068169" description="Riboflavin synthase">
    <location>
        <begin position="1"/>
        <end position="201"/>
    </location>
</feature>
<feature type="repeat" description="Lumazine-binding 1">
    <location>
        <begin position="1"/>
        <end position="97"/>
    </location>
</feature>
<feature type="repeat" description="Lumazine-binding 2">
    <location>
        <begin position="98"/>
        <end position="197"/>
    </location>
</feature>
<feature type="binding site" evidence="3">
    <location>
        <begin position="4"/>
        <end position="6"/>
    </location>
    <ligand>
        <name>2,4-dihydroxypteridine</name>
        <dbReference type="ChEBI" id="CHEBI:16489"/>
        <label>1</label>
    </ligand>
</feature>
<feature type="binding site" evidence="3">
    <location>
        <begin position="47"/>
        <end position="49"/>
    </location>
    <ligand>
        <name>2,4-dihydroxypteridine</name>
        <dbReference type="ChEBI" id="CHEBI:16489"/>
        <label>2</label>
        <note>ligand shared between two trimeric partners</note>
    </ligand>
</feature>
<feature type="binding site" evidence="2">
    <location>
        <begin position="62"/>
        <end position="67"/>
    </location>
    <ligand>
        <name>2,4-dihydroxypteridine</name>
        <dbReference type="ChEBI" id="CHEBI:16489"/>
        <label>2</label>
        <note>ligand shared between two trimeric partners</note>
    </ligand>
</feature>
<feature type="binding site" evidence="3">
    <location>
        <begin position="101"/>
        <end position="103"/>
    </location>
    <ligand>
        <name>2,4-dihydroxypteridine</name>
        <dbReference type="ChEBI" id="CHEBI:16489"/>
        <label>2</label>
        <note>ligand shared between two trimeric partners</note>
    </ligand>
</feature>
<feature type="binding site" description="in other chain" evidence="3">
    <location>
        <position position="136"/>
    </location>
    <ligand>
        <name>2,4-dihydroxypteridine</name>
        <dbReference type="ChEBI" id="CHEBI:16489"/>
        <label>2</label>
        <note>ligand shared between two trimeric partners</note>
    </ligand>
</feature>
<feature type="binding site" evidence="3">
    <location>
        <begin position="145"/>
        <end position="147"/>
    </location>
    <ligand>
        <name>2,4-dihydroxypteridine</name>
        <dbReference type="ChEBI" id="CHEBI:16489"/>
        <label>1</label>
    </ligand>
</feature>
<feature type="binding site" evidence="3">
    <location>
        <begin position="162"/>
        <end position="167"/>
    </location>
    <ligand>
        <name>2,4-dihydroxypteridine</name>
        <dbReference type="ChEBI" id="CHEBI:16489"/>
        <label>1</label>
    </ligand>
</feature>
<name>RISA_MYCBO</name>
<keyword id="KW-1185">Reference proteome</keyword>
<keyword id="KW-0677">Repeat</keyword>
<keyword id="KW-0686">Riboflavin biosynthesis</keyword>
<keyword id="KW-0808">Transferase</keyword>
<accession>P65328</accession>
<accession>A0A1R3XYA8</accession>
<accession>P71680</accession>
<accession>X2BI92</accession>
<reference key="1">
    <citation type="journal article" date="2003" name="Proc. Natl. Acad. Sci. U.S.A.">
        <title>The complete genome sequence of Mycobacterium bovis.</title>
        <authorList>
            <person name="Garnier T."/>
            <person name="Eiglmeier K."/>
            <person name="Camus J.-C."/>
            <person name="Medina N."/>
            <person name="Mansoor H."/>
            <person name="Pryor M."/>
            <person name="Duthoy S."/>
            <person name="Grondin S."/>
            <person name="Lacroix C."/>
            <person name="Monsempe C."/>
            <person name="Simon S."/>
            <person name="Harris B."/>
            <person name="Atkin R."/>
            <person name="Doggett J."/>
            <person name="Mayes R."/>
            <person name="Keating L."/>
            <person name="Wheeler P.R."/>
            <person name="Parkhill J."/>
            <person name="Barrell B.G."/>
            <person name="Cole S.T."/>
            <person name="Gordon S.V."/>
            <person name="Hewinson R.G."/>
        </authorList>
    </citation>
    <scope>NUCLEOTIDE SEQUENCE [LARGE SCALE GENOMIC DNA]</scope>
    <source>
        <strain>ATCC BAA-935 / AF2122/97</strain>
    </source>
</reference>
<reference key="2">
    <citation type="journal article" date="2017" name="Genome Announc.">
        <title>Updated reference genome sequence and annotation of Mycobacterium bovis AF2122/97.</title>
        <authorList>
            <person name="Malone K.M."/>
            <person name="Farrell D."/>
            <person name="Stuber T.P."/>
            <person name="Schubert O.T."/>
            <person name="Aebersold R."/>
            <person name="Robbe-Austerman S."/>
            <person name="Gordon S.V."/>
        </authorList>
    </citation>
    <scope>NUCLEOTIDE SEQUENCE [LARGE SCALE GENOMIC DNA]</scope>
    <scope>GENOME REANNOTATION</scope>
    <source>
        <strain>ATCC BAA-935 / AF2122/97</strain>
    </source>
</reference>
<organism>
    <name type="scientific">Mycobacterium bovis (strain ATCC BAA-935 / AF2122/97)</name>
    <dbReference type="NCBI Taxonomy" id="233413"/>
    <lineage>
        <taxon>Bacteria</taxon>
        <taxon>Bacillati</taxon>
        <taxon>Actinomycetota</taxon>
        <taxon>Actinomycetes</taxon>
        <taxon>Mycobacteriales</taxon>
        <taxon>Mycobacteriaceae</taxon>
        <taxon>Mycobacterium</taxon>
        <taxon>Mycobacterium tuberculosis complex</taxon>
    </lineage>
</organism>
<gene>
    <name type="primary">ribE</name>
    <name type="synonym">ribC</name>
    <name type="ordered locus">BQ2027_MB1447</name>
</gene>
<evidence type="ECO:0000250" key="1"/>
<evidence type="ECO:0000250" key="2">
    <source>
        <dbReference type="UniProtKB" id="P0AFU8"/>
    </source>
</evidence>
<evidence type="ECO:0000250" key="3">
    <source>
        <dbReference type="UniProtKB" id="Q2YN92"/>
    </source>
</evidence>
<protein>
    <recommendedName>
        <fullName>Riboflavin synthase</fullName>
        <shortName>RS</shortName>
        <ecNumber>2.5.1.9</ecNumber>
    </recommendedName>
</protein>
<proteinExistence type="inferred from homology"/>